<keyword id="KW-0687">Ribonucleoprotein</keyword>
<keyword id="KW-0689">Ribosomal protein</keyword>
<organism>
    <name type="scientific">Synechococcus sp. (strain JA-3-3Ab)</name>
    <name type="common">Cyanobacteria bacterium Yellowstone A-Prime</name>
    <dbReference type="NCBI Taxonomy" id="321327"/>
    <lineage>
        <taxon>Bacteria</taxon>
        <taxon>Bacillati</taxon>
        <taxon>Cyanobacteriota</taxon>
        <taxon>Cyanophyceae</taxon>
        <taxon>Synechococcales</taxon>
        <taxon>Synechococcaceae</taxon>
        <taxon>Synechococcus</taxon>
    </lineage>
</organism>
<dbReference type="EMBL" id="CP000239">
    <property type="protein sequence ID" value="ABC99358.1"/>
    <property type="molecule type" value="Genomic_DNA"/>
</dbReference>
<dbReference type="RefSeq" id="WP_011430039.1">
    <property type="nucleotide sequence ID" value="NC_007775.1"/>
</dbReference>
<dbReference type="SMR" id="Q2JV89"/>
<dbReference type="STRING" id="321327.CYA_1170"/>
<dbReference type="KEGG" id="cya:CYA_1170"/>
<dbReference type="eggNOG" id="COG0255">
    <property type="taxonomic scope" value="Bacteria"/>
</dbReference>
<dbReference type="HOGENOM" id="CLU_158491_0_0_3"/>
<dbReference type="OrthoDB" id="9815192at2"/>
<dbReference type="Proteomes" id="UP000008818">
    <property type="component" value="Chromosome"/>
</dbReference>
<dbReference type="GO" id="GO:0022625">
    <property type="term" value="C:cytosolic large ribosomal subunit"/>
    <property type="evidence" value="ECO:0007669"/>
    <property type="project" value="TreeGrafter"/>
</dbReference>
<dbReference type="GO" id="GO:0003735">
    <property type="term" value="F:structural constituent of ribosome"/>
    <property type="evidence" value="ECO:0007669"/>
    <property type="project" value="InterPro"/>
</dbReference>
<dbReference type="GO" id="GO:0006412">
    <property type="term" value="P:translation"/>
    <property type="evidence" value="ECO:0007669"/>
    <property type="project" value="UniProtKB-UniRule"/>
</dbReference>
<dbReference type="CDD" id="cd00427">
    <property type="entry name" value="Ribosomal_L29_HIP"/>
    <property type="match status" value="1"/>
</dbReference>
<dbReference type="Gene3D" id="1.10.287.310">
    <property type="match status" value="1"/>
</dbReference>
<dbReference type="HAMAP" id="MF_00374">
    <property type="entry name" value="Ribosomal_uL29"/>
    <property type="match status" value="1"/>
</dbReference>
<dbReference type="InterPro" id="IPR050063">
    <property type="entry name" value="Ribosomal_protein_uL29"/>
</dbReference>
<dbReference type="InterPro" id="IPR001854">
    <property type="entry name" value="Ribosomal_uL29"/>
</dbReference>
<dbReference type="InterPro" id="IPR036049">
    <property type="entry name" value="Ribosomal_uL29_sf"/>
</dbReference>
<dbReference type="NCBIfam" id="TIGR00012">
    <property type="entry name" value="L29"/>
    <property type="match status" value="1"/>
</dbReference>
<dbReference type="PANTHER" id="PTHR10916">
    <property type="entry name" value="60S RIBOSOMAL PROTEIN L35/50S RIBOSOMAL PROTEIN L29"/>
    <property type="match status" value="1"/>
</dbReference>
<dbReference type="PANTHER" id="PTHR10916:SF0">
    <property type="entry name" value="LARGE RIBOSOMAL SUBUNIT PROTEIN UL29C"/>
    <property type="match status" value="1"/>
</dbReference>
<dbReference type="Pfam" id="PF00831">
    <property type="entry name" value="Ribosomal_L29"/>
    <property type="match status" value="1"/>
</dbReference>
<dbReference type="SUPFAM" id="SSF46561">
    <property type="entry name" value="Ribosomal protein L29 (L29p)"/>
    <property type="match status" value="1"/>
</dbReference>
<reference key="1">
    <citation type="journal article" date="2007" name="ISME J.">
        <title>Population level functional diversity in a microbial community revealed by comparative genomic and metagenomic analyses.</title>
        <authorList>
            <person name="Bhaya D."/>
            <person name="Grossman A.R."/>
            <person name="Steunou A.-S."/>
            <person name="Khuri N."/>
            <person name="Cohan F.M."/>
            <person name="Hamamura N."/>
            <person name="Melendrez M.C."/>
            <person name="Bateson M.M."/>
            <person name="Ward D.M."/>
            <person name="Heidelberg J.F."/>
        </authorList>
    </citation>
    <scope>NUCLEOTIDE SEQUENCE [LARGE SCALE GENOMIC DNA]</scope>
    <source>
        <strain>JA-3-3Ab</strain>
    </source>
</reference>
<accession>Q2JV89</accession>
<name>RL29_SYNJA</name>
<protein>
    <recommendedName>
        <fullName evidence="1">Large ribosomal subunit protein uL29</fullName>
    </recommendedName>
    <alternativeName>
        <fullName evidence="3">50S ribosomal protein L29</fullName>
    </alternativeName>
</protein>
<comment type="similarity">
    <text evidence="1">Belongs to the universal ribosomal protein uL29 family.</text>
</comment>
<feature type="chain" id="PRO_1000007636" description="Large ribosomal subunit protein uL29">
    <location>
        <begin position="1"/>
        <end position="78"/>
    </location>
</feature>
<feature type="region of interest" description="Disordered" evidence="2">
    <location>
        <begin position="59"/>
        <end position="78"/>
    </location>
</feature>
<feature type="compositionally biased region" description="Polar residues" evidence="2">
    <location>
        <begin position="68"/>
        <end position="78"/>
    </location>
</feature>
<sequence length="78" mass="9113">MPMPKIADARALSDEELSQEIYAVKKELFELRLQQATRQLNQPHLIRLRKHKLAQLLTVESERKRGKSLSSTQTQKEE</sequence>
<gene>
    <name evidence="1" type="primary">rpmC</name>
    <name evidence="1" type="synonym">rpl29</name>
    <name type="ordered locus">CYA_1170</name>
</gene>
<evidence type="ECO:0000255" key="1">
    <source>
        <dbReference type="HAMAP-Rule" id="MF_00374"/>
    </source>
</evidence>
<evidence type="ECO:0000256" key="2">
    <source>
        <dbReference type="SAM" id="MobiDB-lite"/>
    </source>
</evidence>
<evidence type="ECO:0000305" key="3"/>
<proteinExistence type="inferred from homology"/>